<proteinExistence type="inferred from homology"/>
<sequence>MMKKLKASEIRQKYLDFFVEKGHMVEPSAPLVPIDDDTLLWINSGVATLKKYFDGRETPKKPRIVNSQKAIRTNDIENVGFTARHHTFFEMLGNFSIGDYFKQEAIEFAWEFLTSDKWMGMEPDKLYVTIHPEDMEAYNIWHKDIGLEESRIIRIEGNFWDIGEGPSGPNTEIFYDRGEAYGQDDPAEEMYPGGENERYLEVWNLVFSEFNHNKDHSYTPLPNKNIDTGMGLERMASVSQNVRTNYETDLFMPIMNEIEKVSGKQYLVNNEQDVAFKVIADHIRTIAFAISDGALPANEGRGYVLRRLLRRAVRFSQTLGINEPFMYKLVDIVADIMEPYYPNVKEKADFIKRVIKSEEERFHETLEDGLAILNELIKKAKATTNEINGKDAFKLYDTYGFPIELTEEIAVQAGLKVDMTTFESEMQQQRDRARQARQNSQSMQVQSEVLKNITSASTFVGYDTATAQTTLTHLIYNGEEVSQVEAGETVYFMLTETPFYAISGGQVADTGIVYNDNFEIAVSEVTKAPNGQNLHKGVVQFGQVNVGATVSAEVNQNDRRDIQKNHSATHLLHAALKSVLGDHVNQAGSLVEADRLRFDFSHFGPMTNDEIDQVERLVNEEIWKGIDVNIQEMDIASAKEMGAMALFGEKYGDVVRVVNMAPFSIELCGGIHVRNTSEIGLFKIVSESGTGAGVRRIEALTGKAAFLYLEDIQEKFNTMKSQLKVKSDDQVVDKLTQLQDEEKALLKQLEQRDKEITSLKMGNIEDQVEEINGYKVLVTEVDVPNAKAIRSTMDDFKSKLQDTIIILASNVDDKVSMVATVPKSLTNNVKAGDLIKQMAPIVGGKGGGRPDMAQGGGTQPENISKSLSFIKDYIKNL</sequence>
<protein>
    <recommendedName>
        <fullName evidence="1">Alanine--tRNA ligase</fullName>
        <ecNumber evidence="1">6.1.1.7</ecNumber>
    </recommendedName>
    <alternativeName>
        <fullName evidence="1">Alanyl-tRNA synthetase</fullName>
        <shortName evidence="1">AlaRS</shortName>
    </alternativeName>
</protein>
<keyword id="KW-0030">Aminoacyl-tRNA synthetase</keyword>
<keyword id="KW-0067">ATP-binding</keyword>
<keyword id="KW-0963">Cytoplasm</keyword>
<keyword id="KW-0436">Ligase</keyword>
<keyword id="KW-0479">Metal-binding</keyword>
<keyword id="KW-0547">Nucleotide-binding</keyword>
<keyword id="KW-0648">Protein biosynthesis</keyword>
<keyword id="KW-0694">RNA-binding</keyword>
<keyword id="KW-0820">tRNA-binding</keyword>
<keyword id="KW-0862">Zinc</keyword>
<name>SYA_STAAT</name>
<evidence type="ECO:0000255" key="1">
    <source>
        <dbReference type="HAMAP-Rule" id="MF_00036"/>
    </source>
</evidence>
<accession>A8Z4F6</accession>
<organism>
    <name type="scientific">Staphylococcus aureus (strain USA300 / TCH1516)</name>
    <dbReference type="NCBI Taxonomy" id="451516"/>
    <lineage>
        <taxon>Bacteria</taxon>
        <taxon>Bacillati</taxon>
        <taxon>Bacillota</taxon>
        <taxon>Bacilli</taxon>
        <taxon>Bacillales</taxon>
        <taxon>Staphylococcaceae</taxon>
        <taxon>Staphylococcus</taxon>
    </lineage>
</organism>
<comment type="function">
    <text evidence="1">Catalyzes the attachment of alanine to tRNA(Ala) in a two-step reaction: alanine is first activated by ATP to form Ala-AMP and then transferred to the acceptor end of tRNA(Ala). Also edits incorrectly charged Ser-tRNA(Ala) and Gly-tRNA(Ala) via its editing domain.</text>
</comment>
<comment type="catalytic activity">
    <reaction evidence="1">
        <text>tRNA(Ala) + L-alanine + ATP = L-alanyl-tRNA(Ala) + AMP + diphosphate</text>
        <dbReference type="Rhea" id="RHEA:12540"/>
        <dbReference type="Rhea" id="RHEA-COMP:9657"/>
        <dbReference type="Rhea" id="RHEA-COMP:9923"/>
        <dbReference type="ChEBI" id="CHEBI:30616"/>
        <dbReference type="ChEBI" id="CHEBI:33019"/>
        <dbReference type="ChEBI" id="CHEBI:57972"/>
        <dbReference type="ChEBI" id="CHEBI:78442"/>
        <dbReference type="ChEBI" id="CHEBI:78497"/>
        <dbReference type="ChEBI" id="CHEBI:456215"/>
        <dbReference type="EC" id="6.1.1.7"/>
    </reaction>
</comment>
<comment type="cofactor">
    <cofactor evidence="1">
        <name>Zn(2+)</name>
        <dbReference type="ChEBI" id="CHEBI:29105"/>
    </cofactor>
    <text evidence="1">Binds 1 zinc ion per subunit.</text>
</comment>
<comment type="subcellular location">
    <subcellularLocation>
        <location evidence="1">Cytoplasm</location>
    </subcellularLocation>
</comment>
<comment type="domain">
    <text evidence="1">Consists of three domains; the N-terminal catalytic domain, the editing domain and the C-terminal C-Ala domain. The editing domain removes incorrectly charged amino acids, while the C-Ala domain, along with tRNA(Ala), serves as a bridge to cooperatively bring together the editing and aminoacylation centers thus stimulating deacylation of misacylated tRNAs.</text>
</comment>
<comment type="similarity">
    <text evidence="1">Belongs to the class-II aminoacyl-tRNA synthetase family.</text>
</comment>
<gene>
    <name evidence="1" type="primary">alaS</name>
    <name type="ordered locus">USA300HOU_1618</name>
</gene>
<feature type="chain" id="PRO_0000347814" description="Alanine--tRNA ligase">
    <location>
        <begin position="1"/>
        <end position="877"/>
    </location>
</feature>
<feature type="binding site" evidence="1">
    <location>
        <position position="566"/>
    </location>
    <ligand>
        <name>Zn(2+)</name>
        <dbReference type="ChEBI" id="CHEBI:29105"/>
    </ligand>
</feature>
<feature type="binding site" evidence="1">
    <location>
        <position position="570"/>
    </location>
    <ligand>
        <name>Zn(2+)</name>
        <dbReference type="ChEBI" id="CHEBI:29105"/>
    </ligand>
</feature>
<feature type="binding site" evidence="1">
    <location>
        <position position="668"/>
    </location>
    <ligand>
        <name>Zn(2+)</name>
        <dbReference type="ChEBI" id="CHEBI:29105"/>
    </ligand>
</feature>
<feature type="binding site" evidence="1">
    <location>
        <position position="672"/>
    </location>
    <ligand>
        <name>Zn(2+)</name>
        <dbReference type="ChEBI" id="CHEBI:29105"/>
    </ligand>
</feature>
<reference key="1">
    <citation type="journal article" date="2007" name="BMC Microbiol.">
        <title>Subtle genetic changes enhance virulence of methicillin resistant and sensitive Staphylococcus aureus.</title>
        <authorList>
            <person name="Highlander S.K."/>
            <person name="Hulten K.G."/>
            <person name="Qin X."/>
            <person name="Jiang H."/>
            <person name="Yerrapragada S."/>
            <person name="Mason E.O. Jr."/>
            <person name="Shang Y."/>
            <person name="Williams T.M."/>
            <person name="Fortunov R.M."/>
            <person name="Liu Y."/>
            <person name="Igboeli O."/>
            <person name="Petrosino J."/>
            <person name="Tirumalai M."/>
            <person name="Uzman A."/>
            <person name="Fox G.E."/>
            <person name="Cardenas A.M."/>
            <person name="Muzny D.M."/>
            <person name="Hemphill L."/>
            <person name="Ding Y."/>
            <person name="Dugan S."/>
            <person name="Blyth P.R."/>
            <person name="Buhay C.J."/>
            <person name="Dinh H.H."/>
            <person name="Hawes A.C."/>
            <person name="Holder M."/>
            <person name="Kovar C.L."/>
            <person name="Lee S.L."/>
            <person name="Liu W."/>
            <person name="Nazareth L.V."/>
            <person name="Wang Q."/>
            <person name="Zhou J."/>
            <person name="Kaplan S.L."/>
            <person name="Weinstock G.M."/>
        </authorList>
    </citation>
    <scope>NUCLEOTIDE SEQUENCE [LARGE SCALE GENOMIC DNA]</scope>
    <source>
        <strain>USA300 / TCH1516</strain>
    </source>
</reference>
<dbReference type="EC" id="6.1.1.7" evidence="1"/>
<dbReference type="EMBL" id="CP000730">
    <property type="protein sequence ID" value="ABX29625.1"/>
    <property type="molecule type" value="Genomic_DNA"/>
</dbReference>
<dbReference type="SMR" id="A8Z4F6"/>
<dbReference type="KEGG" id="sax:USA300HOU_1618"/>
<dbReference type="HOGENOM" id="CLU_004485_1_1_9"/>
<dbReference type="GO" id="GO:0005829">
    <property type="term" value="C:cytosol"/>
    <property type="evidence" value="ECO:0007669"/>
    <property type="project" value="TreeGrafter"/>
</dbReference>
<dbReference type="GO" id="GO:0004813">
    <property type="term" value="F:alanine-tRNA ligase activity"/>
    <property type="evidence" value="ECO:0007669"/>
    <property type="project" value="UniProtKB-UniRule"/>
</dbReference>
<dbReference type="GO" id="GO:0002161">
    <property type="term" value="F:aminoacyl-tRNA deacylase activity"/>
    <property type="evidence" value="ECO:0007669"/>
    <property type="project" value="TreeGrafter"/>
</dbReference>
<dbReference type="GO" id="GO:0005524">
    <property type="term" value="F:ATP binding"/>
    <property type="evidence" value="ECO:0007669"/>
    <property type="project" value="UniProtKB-UniRule"/>
</dbReference>
<dbReference type="GO" id="GO:0140096">
    <property type="term" value="F:catalytic activity, acting on a protein"/>
    <property type="evidence" value="ECO:0007669"/>
    <property type="project" value="UniProtKB-ARBA"/>
</dbReference>
<dbReference type="GO" id="GO:0016740">
    <property type="term" value="F:transferase activity"/>
    <property type="evidence" value="ECO:0007669"/>
    <property type="project" value="UniProtKB-ARBA"/>
</dbReference>
<dbReference type="GO" id="GO:0000049">
    <property type="term" value="F:tRNA binding"/>
    <property type="evidence" value="ECO:0007669"/>
    <property type="project" value="UniProtKB-KW"/>
</dbReference>
<dbReference type="GO" id="GO:0008270">
    <property type="term" value="F:zinc ion binding"/>
    <property type="evidence" value="ECO:0007669"/>
    <property type="project" value="UniProtKB-UniRule"/>
</dbReference>
<dbReference type="GO" id="GO:0006419">
    <property type="term" value="P:alanyl-tRNA aminoacylation"/>
    <property type="evidence" value="ECO:0007669"/>
    <property type="project" value="UniProtKB-UniRule"/>
</dbReference>
<dbReference type="CDD" id="cd00673">
    <property type="entry name" value="AlaRS_core"/>
    <property type="match status" value="1"/>
</dbReference>
<dbReference type="FunFam" id="2.40.30.130:FF:000001">
    <property type="entry name" value="Alanine--tRNA ligase"/>
    <property type="match status" value="1"/>
</dbReference>
<dbReference type="FunFam" id="3.10.310.40:FF:000001">
    <property type="entry name" value="Alanine--tRNA ligase"/>
    <property type="match status" value="1"/>
</dbReference>
<dbReference type="FunFam" id="3.30.54.20:FF:000001">
    <property type="entry name" value="Alanine--tRNA ligase"/>
    <property type="match status" value="1"/>
</dbReference>
<dbReference type="FunFam" id="3.30.930.10:FF:000046">
    <property type="entry name" value="Alanine--tRNA ligase"/>
    <property type="match status" value="1"/>
</dbReference>
<dbReference type="FunFam" id="3.30.980.10:FF:000004">
    <property type="entry name" value="Alanine--tRNA ligase, cytoplasmic"/>
    <property type="match status" value="1"/>
</dbReference>
<dbReference type="Gene3D" id="2.40.30.130">
    <property type="match status" value="1"/>
</dbReference>
<dbReference type="Gene3D" id="3.10.310.40">
    <property type="match status" value="1"/>
</dbReference>
<dbReference type="Gene3D" id="3.30.54.20">
    <property type="match status" value="1"/>
</dbReference>
<dbReference type="Gene3D" id="3.30.930.10">
    <property type="entry name" value="Bira Bifunctional Protein, Domain 2"/>
    <property type="match status" value="1"/>
</dbReference>
<dbReference type="Gene3D" id="3.30.980.10">
    <property type="entry name" value="Threonyl-trna Synthetase, Chain A, domain 2"/>
    <property type="match status" value="1"/>
</dbReference>
<dbReference type="HAMAP" id="MF_00036_B">
    <property type="entry name" value="Ala_tRNA_synth_B"/>
    <property type="match status" value="1"/>
</dbReference>
<dbReference type="InterPro" id="IPR045864">
    <property type="entry name" value="aa-tRNA-synth_II/BPL/LPL"/>
</dbReference>
<dbReference type="InterPro" id="IPR002318">
    <property type="entry name" value="Ala-tRNA-lgiase_IIc"/>
</dbReference>
<dbReference type="InterPro" id="IPR018162">
    <property type="entry name" value="Ala-tRNA-ligase_IIc_anticod-bd"/>
</dbReference>
<dbReference type="InterPro" id="IPR018165">
    <property type="entry name" value="Ala-tRNA-synth_IIc_core"/>
</dbReference>
<dbReference type="InterPro" id="IPR018164">
    <property type="entry name" value="Ala-tRNA-synth_IIc_N"/>
</dbReference>
<dbReference type="InterPro" id="IPR050058">
    <property type="entry name" value="Ala-tRNA_ligase"/>
</dbReference>
<dbReference type="InterPro" id="IPR023033">
    <property type="entry name" value="Ala_tRNA_ligase_euk/bac"/>
</dbReference>
<dbReference type="InterPro" id="IPR003156">
    <property type="entry name" value="DHHA1_dom"/>
</dbReference>
<dbReference type="InterPro" id="IPR018163">
    <property type="entry name" value="Thr/Ala-tRNA-synth_IIc_edit"/>
</dbReference>
<dbReference type="InterPro" id="IPR009000">
    <property type="entry name" value="Transl_B-barrel_sf"/>
</dbReference>
<dbReference type="InterPro" id="IPR012947">
    <property type="entry name" value="tRNA_SAD"/>
</dbReference>
<dbReference type="NCBIfam" id="TIGR00344">
    <property type="entry name" value="alaS"/>
    <property type="match status" value="1"/>
</dbReference>
<dbReference type="PANTHER" id="PTHR11777:SF9">
    <property type="entry name" value="ALANINE--TRNA LIGASE, CYTOPLASMIC"/>
    <property type="match status" value="1"/>
</dbReference>
<dbReference type="PANTHER" id="PTHR11777">
    <property type="entry name" value="ALANYL-TRNA SYNTHETASE"/>
    <property type="match status" value="1"/>
</dbReference>
<dbReference type="Pfam" id="PF02272">
    <property type="entry name" value="DHHA1"/>
    <property type="match status" value="1"/>
</dbReference>
<dbReference type="Pfam" id="PF01411">
    <property type="entry name" value="tRNA-synt_2c"/>
    <property type="match status" value="1"/>
</dbReference>
<dbReference type="Pfam" id="PF07973">
    <property type="entry name" value="tRNA_SAD"/>
    <property type="match status" value="1"/>
</dbReference>
<dbReference type="PRINTS" id="PR00980">
    <property type="entry name" value="TRNASYNTHALA"/>
</dbReference>
<dbReference type="SMART" id="SM00863">
    <property type="entry name" value="tRNA_SAD"/>
    <property type="match status" value="1"/>
</dbReference>
<dbReference type="SUPFAM" id="SSF55681">
    <property type="entry name" value="Class II aaRS and biotin synthetases"/>
    <property type="match status" value="1"/>
</dbReference>
<dbReference type="SUPFAM" id="SSF101353">
    <property type="entry name" value="Putative anticodon-binding domain of alanyl-tRNA synthetase (AlaRS)"/>
    <property type="match status" value="1"/>
</dbReference>
<dbReference type="SUPFAM" id="SSF55186">
    <property type="entry name" value="ThrRS/AlaRS common domain"/>
    <property type="match status" value="1"/>
</dbReference>
<dbReference type="SUPFAM" id="SSF50447">
    <property type="entry name" value="Translation proteins"/>
    <property type="match status" value="1"/>
</dbReference>
<dbReference type="PROSITE" id="PS50860">
    <property type="entry name" value="AA_TRNA_LIGASE_II_ALA"/>
    <property type="match status" value="1"/>
</dbReference>